<keyword id="KW-0479">Metal-binding</keyword>
<keyword id="KW-0677">Repeat</keyword>
<keyword id="KW-0804">Transcription</keyword>
<keyword id="KW-0805">Transcription regulation</keyword>
<keyword id="KW-0862">Zinc</keyword>
<keyword id="KW-0863">Zinc-finger</keyword>
<evidence type="ECO:0000255" key="1">
    <source>
        <dbReference type="HAMAP-Rule" id="MF_00383"/>
    </source>
</evidence>
<evidence type="ECO:0000255" key="2">
    <source>
        <dbReference type="PROSITE-ProRule" id="PRU00469"/>
    </source>
</evidence>
<name>TF2B_METM6</name>
<organism>
    <name type="scientific">Methanococcus maripaludis (strain C6 / ATCC BAA-1332)</name>
    <dbReference type="NCBI Taxonomy" id="444158"/>
    <lineage>
        <taxon>Archaea</taxon>
        <taxon>Methanobacteriati</taxon>
        <taxon>Methanobacteriota</taxon>
        <taxon>Methanomada group</taxon>
        <taxon>Methanococci</taxon>
        <taxon>Methanococcales</taxon>
        <taxon>Methanococcaceae</taxon>
        <taxon>Methanococcus</taxon>
    </lineage>
</organism>
<feature type="chain" id="PRO_1000122400" description="Transcription initiation factor IIB">
    <location>
        <begin position="1"/>
        <end position="339"/>
    </location>
</feature>
<feature type="repeat" description="1">
    <location>
        <begin position="156"/>
        <end position="239"/>
    </location>
</feature>
<feature type="repeat" description="2">
    <location>
        <begin position="250"/>
        <end position="331"/>
    </location>
</feature>
<feature type="zinc finger region" description="TFIIB-type" evidence="2">
    <location>
        <begin position="39"/>
        <end position="70"/>
    </location>
</feature>
<feature type="binding site" evidence="2">
    <location>
        <position position="43"/>
    </location>
    <ligand>
        <name>Zn(2+)</name>
        <dbReference type="ChEBI" id="CHEBI:29105"/>
    </ligand>
</feature>
<feature type="binding site" evidence="2">
    <location>
        <position position="46"/>
    </location>
    <ligand>
        <name>Zn(2+)</name>
        <dbReference type="ChEBI" id="CHEBI:29105"/>
    </ligand>
</feature>
<feature type="binding site" evidence="2">
    <location>
        <position position="62"/>
    </location>
    <ligand>
        <name>Zn(2+)</name>
        <dbReference type="ChEBI" id="CHEBI:29105"/>
    </ligand>
</feature>
<feature type="binding site" evidence="2">
    <location>
        <position position="65"/>
    </location>
    <ligand>
        <name>Zn(2+)</name>
        <dbReference type="ChEBI" id="CHEBI:29105"/>
    </ligand>
</feature>
<protein>
    <recommendedName>
        <fullName evidence="1">Transcription initiation factor IIB</fullName>
        <shortName evidence="1">TFIIB</shortName>
    </recommendedName>
</protein>
<gene>
    <name evidence="1" type="primary">tfb</name>
    <name type="ordered locus">MmarC6_0908</name>
</gene>
<dbReference type="EMBL" id="CP000867">
    <property type="protein sequence ID" value="ABX01723.1"/>
    <property type="molecule type" value="Genomic_DNA"/>
</dbReference>
<dbReference type="SMR" id="A9A8Q0"/>
<dbReference type="STRING" id="444158.MmarC6_0908"/>
<dbReference type="KEGG" id="mmx:MmarC6_0908"/>
<dbReference type="eggNOG" id="arCOG01981">
    <property type="taxonomic scope" value="Archaea"/>
</dbReference>
<dbReference type="HOGENOM" id="CLU_043736_0_1_2"/>
<dbReference type="OrthoDB" id="7429at2157"/>
<dbReference type="PhylomeDB" id="A9A8Q0"/>
<dbReference type="GO" id="GO:0097550">
    <property type="term" value="C:transcription preinitiation complex"/>
    <property type="evidence" value="ECO:0007669"/>
    <property type="project" value="TreeGrafter"/>
</dbReference>
<dbReference type="GO" id="GO:0003700">
    <property type="term" value="F:DNA-binding transcription factor activity"/>
    <property type="evidence" value="ECO:0007669"/>
    <property type="project" value="UniProtKB-UniRule"/>
</dbReference>
<dbReference type="GO" id="GO:0017025">
    <property type="term" value="F:TBP-class protein binding"/>
    <property type="evidence" value="ECO:0007669"/>
    <property type="project" value="InterPro"/>
</dbReference>
<dbReference type="GO" id="GO:0008270">
    <property type="term" value="F:zinc ion binding"/>
    <property type="evidence" value="ECO:0007669"/>
    <property type="project" value="UniProtKB-UniRule"/>
</dbReference>
<dbReference type="GO" id="GO:0070897">
    <property type="term" value="P:transcription preinitiation complex assembly"/>
    <property type="evidence" value="ECO:0007669"/>
    <property type="project" value="InterPro"/>
</dbReference>
<dbReference type="CDD" id="cd20549">
    <property type="entry name" value="CYCLIN_TFIIB_archaea_like_rpt1"/>
    <property type="match status" value="1"/>
</dbReference>
<dbReference type="CDD" id="cd20550">
    <property type="entry name" value="CYCLIN_TFIIB_archaea_like_rpt2"/>
    <property type="match status" value="1"/>
</dbReference>
<dbReference type="FunFam" id="1.10.472.10:FF:000023">
    <property type="entry name" value="Transcription initiation factor IIB"/>
    <property type="match status" value="1"/>
</dbReference>
<dbReference type="FunFam" id="1.10.472.170:FF:000001">
    <property type="entry name" value="Transcription initiation factor IIB"/>
    <property type="match status" value="1"/>
</dbReference>
<dbReference type="Gene3D" id="1.10.472.170">
    <property type="match status" value="1"/>
</dbReference>
<dbReference type="Gene3D" id="1.10.472.10">
    <property type="entry name" value="Cyclin-like"/>
    <property type="match status" value="1"/>
</dbReference>
<dbReference type="HAMAP" id="MF_00383">
    <property type="entry name" value="TF2B_arch"/>
    <property type="match status" value="1"/>
</dbReference>
<dbReference type="InterPro" id="IPR013763">
    <property type="entry name" value="Cyclin-like_dom"/>
</dbReference>
<dbReference type="InterPro" id="IPR036915">
    <property type="entry name" value="Cyclin-like_sf"/>
</dbReference>
<dbReference type="InterPro" id="IPR000812">
    <property type="entry name" value="TFIIB"/>
</dbReference>
<dbReference type="InterPro" id="IPR023484">
    <property type="entry name" value="TFIIB_arc"/>
</dbReference>
<dbReference type="InterPro" id="IPR023486">
    <property type="entry name" value="TFIIB_CS"/>
</dbReference>
<dbReference type="InterPro" id="IPR013150">
    <property type="entry name" value="TFIIB_cyclin"/>
</dbReference>
<dbReference type="InterPro" id="IPR013137">
    <property type="entry name" value="Znf_TFIIB"/>
</dbReference>
<dbReference type="NCBIfam" id="NF001658">
    <property type="entry name" value="PRK00423.1"/>
    <property type="match status" value="1"/>
</dbReference>
<dbReference type="PANTHER" id="PTHR11618:SF13">
    <property type="entry name" value="TRANSCRIPTION INITIATION FACTOR IIB"/>
    <property type="match status" value="1"/>
</dbReference>
<dbReference type="PANTHER" id="PTHR11618">
    <property type="entry name" value="TRANSCRIPTION INITIATION FACTOR IIB-RELATED"/>
    <property type="match status" value="1"/>
</dbReference>
<dbReference type="Pfam" id="PF00382">
    <property type="entry name" value="TFIIB"/>
    <property type="match status" value="2"/>
</dbReference>
<dbReference type="Pfam" id="PF08271">
    <property type="entry name" value="Zn_Ribbon_TF"/>
    <property type="match status" value="1"/>
</dbReference>
<dbReference type="PRINTS" id="PR00685">
    <property type="entry name" value="TIFACTORIIB"/>
</dbReference>
<dbReference type="SMART" id="SM00385">
    <property type="entry name" value="CYCLIN"/>
    <property type="match status" value="2"/>
</dbReference>
<dbReference type="SUPFAM" id="SSF47954">
    <property type="entry name" value="Cyclin-like"/>
    <property type="match status" value="2"/>
</dbReference>
<dbReference type="SUPFAM" id="SSF57783">
    <property type="entry name" value="Zinc beta-ribbon"/>
    <property type="match status" value="1"/>
</dbReference>
<dbReference type="PROSITE" id="PS00782">
    <property type="entry name" value="TFIIB"/>
    <property type="match status" value="2"/>
</dbReference>
<dbReference type="PROSITE" id="PS51134">
    <property type="entry name" value="ZF_TFIIB"/>
    <property type="match status" value="1"/>
</dbReference>
<comment type="function">
    <text evidence="1">Stabilizes TBP binding to an archaeal box-A promoter. Also responsible for recruiting RNA polymerase II to the pre-initiation complex (DNA-TBP-TFIIB).</text>
</comment>
<comment type="similarity">
    <text evidence="1">Belongs to the TFIIB family.</text>
</comment>
<reference key="1">
    <citation type="submission" date="2007-10" db="EMBL/GenBank/DDBJ databases">
        <title>Complete sequence of Methanococcus maripaludis C6.</title>
        <authorList>
            <consortium name="US DOE Joint Genome Institute"/>
            <person name="Copeland A."/>
            <person name="Lucas S."/>
            <person name="Lapidus A."/>
            <person name="Barry K."/>
            <person name="Glavina del Rio T."/>
            <person name="Dalin E."/>
            <person name="Tice H."/>
            <person name="Pitluck S."/>
            <person name="Clum A."/>
            <person name="Schmutz J."/>
            <person name="Larimer F."/>
            <person name="Land M."/>
            <person name="Hauser L."/>
            <person name="Kyrpides N."/>
            <person name="Mikhailova N."/>
            <person name="Sieprawska-Lupa M."/>
            <person name="Whitman W.B."/>
            <person name="Richardson P."/>
        </authorList>
    </citation>
    <scope>NUCLEOTIDE SEQUENCE [LARGE SCALE GENOMIC DNA]</scope>
    <source>
        <strain>C6 / ATCC BAA-1332</strain>
    </source>
</reference>
<proteinExistence type="inferred from homology"/>
<sequence length="339" mass="38227">MKVEAITKEETKKPERKIKLAIAKPEDYSNKNVILEKEEELICPVCGSKNIIKDYERAEIVCEMCGCVLQQNLFDVGPEWRAFDHEQRVKRSRVGAPMTYTIHDKGLSTVIDWRNKDSYGKDISADKRAQLYRLRKWQRRIRVSDASERNLAFALSELDRIASKLGLPRNVRENAAVLYRGAVEKGLIRGRSIEGVAAAALYAACRRCKVPRTLDEIAEVSRVDRKEIGRTYRFISRELNIRLAPTNPVDYVPRFASELKLPGEVESKAISILQKAGEKGLTSGRGPTGVAAAAIYIASVLQGTRRTQREVADVAGVTEVTIRNRYKELTEHLDIDVTL</sequence>
<accession>A9A8Q0</accession>